<dbReference type="EC" id="3.6.5.-" evidence="1"/>
<dbReference type="EMBL" id="CP000241">
    <property type="protein sequence ID" value="ABF84372.1"/>
    <property type="molecule type" value="Genomic_DNA"/>
</dbReference>
<dbReference type="RefSeq" id="WP_000497245.1">
    <property type="nucleotide sequence ID" value="NC_008086.1"/>
</dbReference>
<dbReference type="SMR" id="Q1CUK0"/>
<dbReference type="KEGG" id="hpa:HPAG1_0305"/>
<dbReference type="HOGENOM" id="CLU_011747_2_0_7"/>
<dbReference type="GO" id="GO:0005737">
    <property type="term" value="C:cytoplasm"/>
    <property type="evidence" value="ECO:0007669"/>
    <property type="project" value="UniProtKB-SubCell"/>
</dbReference>
<dbReference type="GO" id="GO:0005525">
    <property type="term" value="F:GTP binding"/>
    <property type="evidence" value="ECO:0007669"/>
    <property type="project" value="UniProtKB-UniRule"/>
</dbReference>
<dbReference type="GO" id="GO:0003924">
    <property type="term" value="F:GTPase activity"/>
    <property type="evidence" value="ECO:0007669"/>
    <property type="project" value="UniProtKB-UniRule"/>
</dbReference>
<dbReference type="GO" id="GO:0000287">
    <property type="term" value="F:magnesium ion binding"/>
    <property type="evidence" value="ECO:0007669"/>
    <property type="project" value="InterPro"/>
</dbReference>
<dbReference type="GO" id="GO:0042254">
    <property type="term" value="P:ribosome biogenesis"/>
    <property type="evidence" value="ECO:0007669"/>
    <property type="project" value="UniProtKB-UniRule"/>
</dbReference>
<dbReference type="CDD" id="cd01898">
    <property type="entry name" value="Obg"/>
    <property type="match status" value="1"/>
</dbReference>
<dbReference type="FunFam" id="2.70.210.12:FF:000001">
    <property type="entry name" value="GTPase Obg"/>
    <property type="match status" value="1"/>
</dbReference>
<dbReference type="Gene3D" id="2.70.210.12">
    <property type="entry name" value="GTP1/OBG domain"/>
    <property type="match status" value="1"/>
</dbReference>
<dbReference type="Gene3D" id="3.40.50.300">
    <property type="entry name" value="P-loop containing nucleotide triphosphate hydrolases"/>
    <property type="match status" value="1"/>
</dbReference>
<dbReference type="HAMAP" id="MF_01454">
    <property type="entry name" value="GTPase_Obg"/>
    <property type="match status" value="1"/>
</dbReference>
<dbReference type="InterPro" id="IPR031167">
    <property type="entry name" value="G_OBG"/>
</dbReference>
<dbReference type="InterPro" id="IPR006073">
    <property type="entry name" value="GTP-bd"/>
</dbReference>
<dbReference type="InterPro" id="IPR014100">
    <property type="entry name" value="GTP-bd_Obg/CgtA"/>
</dbReference>
<dbReference type="InterPro" id="IPR006074">
    <property type="entry name" value="GTP1-OBG_CS"/>
</dbReference>
<dbReference type="InterPro" id="IPR006169">
    <property type="entry name" value="GTP1_OBG_dom"/>
</dbReference>
<dbReference type="InterPro" id="IPR036726">
    <property type="entry name" value="GTP1_OBG_dom_sf"/>
</dbReference>
<dbReference type="InterPro" id="IPR045086">
    <property type="entry name" value="OBG_GTPase"/>
</dbReference>
<dbReference type="InterPro" id="IPR027417">
    <property type="entry name" value="P-loop_NTPase"/>
</dbReference>
<dbReference type="NCBIfam" id="TIGR02729">
    <property type="entry name" value="Obg_CgtA"/>
    <property type="match status" value="1"/>
</dbReference>
<dbReference type="NCBIfam" id="NF008955">
    <property type="entry name" value="PRK12297.1"/>
    <property type="match status" value="1"/>
</dbReference>
<dbReference type="NCBIfam" id="NF008956">
    <property type="entry name" value="PRK12299.1"/>
    <property type="match status" value="1"/>
</dbReference>
<dbReference type="PANTHER" id="PTHR11702">
    <property type="entry name" value="DEVELOPMENTALLY REGULATED GTP-BINDING PROTEIN-RELATED"/>
    <property type="match status" value="1"/>
</dbReference>
<dbReference type="PANTHER" id="PTHR11702:SF31">
    <property type="entry name" value="MITOCHONDRIAL RIBOSOME-ASSOCIATED GTPASE 2"/>
    <property type="match status" value="1"/>
</dbReference>
<dbReference type="Pfam" id="PF01018">
    <property type="entry name" value="GTP1_OBG"/>
    <property type="match status" value="1"/>
</dbReference>
<dbReference type="Pfam" id="PF01926">
    <property type="entry name" value="MMR_HSR1"/>
    <property type="match status" value="1"/>
</dbReference>
<dbReference type="PIRSF" id="PIRSF002401">
    <property type="entry name" value="GTP_bd_Obg/CgtA"/>
    <property type="match status" value="1"/>
</dbReference>
<dbReference type="PRINTS" id="PR00326">
    <property type="entry name" value="GTP1OBG"/>
</dbReference>
<dbReference type="SUPFAM" id="SSF82051">
    <property type="entry name" value="Obg GTP-binding protein N-terminal domain"/>
    <property type="match status" value="1"/>
</dbReference>
<dbReference type="SUPFAM" id="SSF52540">
    <property type="entry name" value="P-loop containing nucleoside triphosphate hydrolases"/>
    <property type="match status" value="1"/>
</dbReference>
<dbReference type="PROSITE" id="PS51710">
    <property type="entry name" value="G_OBG"/>
    <property type="match status" value="1"/>
</dbReference>
<dbReference type="PROSITE" id="PS00905">
    <property type="entry name" value="GTP1_OBG"/>
    <property type="match status" value="1"/>
</dbReference>
<dbReference type="PROSITE" id="PS51883">
    <property type="entry name" value="OBG"/>
    <property type="match status" value="1"/>
</dbReference>
<gene>
    <name evidence="1" type="primary">obg</name>
    <name type="ordered locus">HPAG1_0305</name>
</gene>
<organism>
    <name type="scientific">Helicobacter pylori (strain HPAG1)</name>
    <dbReference type="NCBI Taxonomy" id="357544"/>
    <lineage>
        <taxon>Bacteria</taxon>
        <taxon>Pseudomonadati</taxon>
        <taxon>Campylobacterota</taxon>
        <taxon>Epsilonproteobacteria</taxon>
        <taxon>Campylobacterales</taxon>
        <taxon>Helicobacteraceae</taxon>
        <taxon>Helicobacter</taxon>
    </lineage>
</organism>
<accession>Q1CUK0</accession>
<feature type="chain" id="PRO_0000385974" description="GTPase Obg">
    <location>
        <begin position="1"/>
        <end position="360"/>
    </location>
</feature>
<feature type="domain" description="Obg" evidence="2">
    <location>
        <begin position="1"/>
        <end position="156"/>
    </location>
</feature>
<feature type="domain" description="OBG-type G" evidence="1">
    <location>
        <begin position="157"/>
        <end position="360"/>
    </location>
</feature>
<feature type="binding site" evidence="1">
    <location>
        <begin position="163"/>
        <end position="170"/>
    </location>
    <ligand>
        <name>GTP</name>
        <dbReference type="ChEBI" id="CHEBI:37565"/>
    </ligand>
</feature>
<feature type="binding site" evidence="1">
    <location>
        <position position="170"/>
    </location>
    <ligand>
        <name>Mg(2+)</name>
        <dbReference type="ChEBI" id="CHEBI:18420"/>
    </ligand>
</feature>
<feature type="binding site" evidence="1">
    <location>
        <begin position="188"/>
        <end position="192"/>
    </location>
    <ligand>
        <name>GTP</name>
        <dbReference type="ChEBI" id="CHEBI:37565"/>
    </ligand>
</feature>
<feature type="binding site" evidence="1">
    <location>
        <position position="190"/>
    </location>
    <ligand>
        <name>Mg(2+)</name>
        <dbReference type="ChEBI" id="CHEBI:18420"/>
    </ligand>
</feature>
<feature type="binding site" evidence="1">
    <location>
        <begin position="210"/>
        <end position="213"/>
    </location>
    <ligand>
        <name>GTP</name>
        <dbReference type="ChEBI" id="CHEBI:37565"/>
    </ligand>
</feature>
<feature type="binding site" evidence="1">
    <location>
        <begin position="279"/>
        <end position="282"/>
    </location>
    <ligand>
        <name>GTP</name>
        <dbReference type="ChEBI" id="CHEBI:37565"/>
    </ligand>
</feature>
<feature type="binding site" evidence="1">
    <location>
        <begin position="341"/>
        <end position="343"/>
    </location>
    <ligand>
        <name>GTP</name>
        <dbReference type="ChEBI" id="CHEBI:37565"/>
    </ligand>
</feature>
<proteinExistence type="inferred from homology"/>
<keyword id="KW-0963">Cytoplasm</keyword>
<keyword id="KW-0342">GTP-binding</keyword>
<keyword id="KW-0378">Hydrolase</keyword>
<keyword id="KW-0460">Magnesium</keyword>
<keyword id="KW-0479">Metal-binding</keyword>
<keyword id="KW-0547">Nucleotide-binding</keyword>
<protein>
    <recommendedName>
        <fullName evidence="1">GTPase Obg</fullName>
        <ecNumber evidence="1">3.6.5.-</ecNumber>
    </recommendedName>
    <alternativeName>
        <fullName evidence="1">GTP-binding protein Obg</fullName>
    </alternativeName>
</protein>
<reference key="1">
    <citation type="journal article" date="2006" name="Proc. Natl. Acad. Sci. U.S.A.">
        <title>The complete genome sequence of a chronic atrophic gastritis Helicobacter pylori strain: evolution during disease progression.</title>
        <authorList>
            <person name="Oh J.D."/>
            <person name="Kling-Baeckhed H."/>
            <person name="Giannakis M."/>
            <person name="Xu J."/>
            <person name="Fulton R.S."/>
            <person name="Fulton L.A."/>
            <person name="Cordum H.S."/>
            <person name="Wang C."/>
            <person name="Elliott G."/>
            <person name="Edwards J."/>
            <person name="Mardis E.R."/>
            <person name="Engstrand L.G."/>
            <person name="Gordon J.I."/>
        </authorList>
    </citation>
    <scope>NUCLEOTIDE SEQUENCE [LARGE SCALE GENOMIC DNA]</scope>
    <source>
        <strain>HPAG1</strain>
    </source>
</reference>
<evidence type="ECO:0000255" key="1">
    <source>
        <dbReference type="HAMAP-Rule" id="MF_01454"/>
    </source>
</evidence>
<evidence type="ECO:0000255" key="2">
    <source>
        <dbReference type="PROSITE-ProRule" id="PRU01231"/>
    </source>
</evidence>
<sequence length="360" mass="38747">MFVDSVEIIIASGKGGPGMVSFRREKFVIKGGPDGGDGGDGGDVYFEVDNNTDTLASFRGTKHHKAKNGAPGGTRNCAGKKGEDKIIVVPPGTQVFVGDKLWLDLITPKERVLALKGGKGGLGNAHFKSATKQQPTYAQKGLEGVEKCVRLELKLIADIGLVGFPNAGKSTLISTISNAKPKIANYEFTTLVPNLGVVSVDEKSEFLMADIPGIIEGASQGKGLGISFLKHIERTKVLAFVLDASRLDLGIKEQYQRLRLELEKFSPALANKPFGVLLNKCDVVENIDKMAKDFCAFLNLEAQKLEAFGLEPYLGFLHPHLTSDFENNPNEKSALFVLPLSAVSALNTHALKFVLLEALP</sequence>
<comment type="function">
    <text evidence="1">An essential GTPase which binds GTP, GDP and possibly (p)ppGpp with moderate affinity, with high nucleotide exchange rates and a fairly low GTP hydrolysis rate. Plays a role in control of the cell cycle, stress response, ribosome biogenesis and in those bacteria that undergo differentiation, in morphogenesis control.</text>
</comment>
<comment type="cofactor">
    <cofactor evidence="1">
        <name>Mg(2+)</name>
        <dbReference type="ChEBI" id="CHEBI:18420"/>
    </cofactor>
</comment>
<comment type="subunit">
    <text evidence="1">Monomer.</text>
</comment>
<comment type="subcellular location">
    <subcellularLocation>
        <location evidence="1">Cytoplasm</location>
    </subcellularLocation>
</comment>
<comment type="similarity">
    <text evidence="1">Belongs to the TRAFAC class OBG-HflX-like GTPase superfamily. OBG GTPase family.</text>
</comment>
<name>OBG_HELPH</name>